<dbReference type="EMBL" id="AE008691">
    <property type="protein sequence ID" value="AAM25400.1"/>
    <property type="molecule type" value="Genomic_DNA"/>
</dbReference>
<dbReference type="RefSeq" id="WP_011026303.1">
    <property type="nucleotide sequence ID" value="NC_003869.1"/>
</dbReference>
<dbReference type="SMR" id="Q8R7Y9"/>
<dbReference type="STRING" id="273068.TTE2256"/>
<dbReference type="KEGG" id="tte:TTE2256"/>
<dbReference type="eggNOG" id="COG0103">
    <property type="taxonomic scope" value="Bacteria"/>
</dbReference>
<dbReference type="HOGENOM" id="CLU_046483_2_1_9"/>
<dbReference type="OrthoDB" id="9803965at2"/>
<dbReference type="Proteomes" id="UP000000555">
    <property type="component" value="Chromosome"/>
</dbReference>
<dbReference type="GO" id="GO:0022627">
    <property type="term" value="C:cytosolic small ribosomal subunit"/>
    <property type="evidence" value="ECO:0007669"/>
    <property type="project" value="TreeGrafter"/>
</dbReference>
<dbReference type="GO" id="GO:0003723">
    <property type="term" value="F:RNA binding"/>
    <property type="evidence" value="ECO:0007669"/>
    <property type="project" value="TreeGrafter"/>
</dbReference>
<dbReference type="GO" id="GO:0003735">
    <property type="term" value="F:structural constituent of ribosome"/>
    <property type="evidence" value="ECO:0007669"/>
    <property type="project" value="InterPro"/>
</dbReference>
<dbReference type="GO" id="GO:0006412">
    <property type="term" value="P:translation"/>
    <property type="evidence" value="ECO:0007669"/>
    <property type="project" value="UniProtKB-UniRule"/>
</dbReference>
<dbReference type="FunFam" id="3.30.230.10:FF:000001">
    <property type="entry name" value="30S ribosomal protein S9"/>
    <property type="match status" value="1"/>
</dbReference>
<dbReference type="Gene3D" id="3.30.230.10">
    <property type="match status" value="1"/>
</dbReference>
<dbReference type="HAMAP" id="MF_00532_B">
    <property type="entry name" value="Ribosomal_uS9_B"/>
    <property type="match status" value="1"/>
</dbReference>
<dbReference type="InterPro" id="IPR020568">
    <property type="entry name" value="Ribosomal_Su5_D2-typ_SF"/>
</dbReference>
<dbReference type="InterPro" id="IPR000754">
    <property type="entry name" value="Ribosomal_uS9"/>
</dbReference>
<dbReference type="InterPro" id="IPR023035">
    <property type="entry name" value="Ribosomal_uS9_bac/plastid"/>
</dbReference>
<dbReference type="InterPro" id="IPR020574">
    <property type="entry name" value="Ribosomal_uS9_CS"/>
</dbReference>
<dbReference type="InterPro" id="IPR014721">
    <property type="entry name" value="Ribsml_uS5_D2-typ_fold_subgr"/>
</dbReference>
<dbReference type="NCBIfam" id="NF001099">
    <property type="entry name" value="PRK00132.1"/>
    <property type="match status" value="1"/>
</dbReference>
<dbReference type="PANTHER" id="PTHR21569">
    <property type="entry name" value="RIBOSOMAL PROTEIN S9"/>
    <property type="match status" value="1"/>
</dbReference>
<dbReference type="PANTHER" id="PTHR21569:SF1">
    <property type="entry name" value="SMALL RIBOSOMAL SUBUNIT PROTEIN US9M"/>
    <property type="match status" value="1"/>
</dbReference>
<dbReference type="Pfam" id="PF00380">
    <property type="entry name" value="Ribosomal_S9"/>
    <property type="match status" value="1"/>
</dbReference>
<dbReference type="SUPFAM" id="SSF54211">
    <property type="entry name" value="Ribosomal protein S5 domain 2-like"/>
    <property type="match status" value="1"/>
</dbReference>
<dbReference type="PROSITE" id="PS00360">
    <property type="entry name" value="RIBOSOMAL_S9"/>
    <property type="match status" value="1"/>
</dbReference>
<organism>
    <name type="scientific">Caldanaerobacter subterraneus subsp. tengcongensis (strain DSM 15242 / JCM 11007 / NBRC 100824 / MB4)</name>
    <name type="common">Thermoanaerobacter tengcongensis</name>
    <dbReference type="NCBI Taxonomy" id="273068"/>
    <lineage>
        <taxon>Bacteria</taxon>
        <taxon>Bacillati</taxon>
        <taxon>Bacillota</taxon>
        <taxon>Clostridia</taxon>
        <taxon>Thermoanaerobacterales</taxon>
        <taxon>Thermoanaerobacteraceae</taxon>
        <taxon>Caldanaerobacter</taxon>
    </lineage>
</organism>
<comment type="similarity">
    <text evidence="1">Belongs to the universal ribosomal protein uS9 family.</text>
</comment>
<protein>
    <recommendedName>
        <fullName evidence="1">Small ribosomal subunit protein uS9</fullName>
    </recommendedName>
    <alternativeName>
        <fullName evidence="3">30S ribosomal protein S9</fullName>
    </alternativeName>
</protein>
<keyword id="KW-1185">Reference proteome</keyword>
<keyword id="KW-0687">Ribonucleoprotein</keyword>
<keyword id="KW-0689">Ribosomal protein</keyword>
<reference key="1">
    <citation type="journal article" date="2002" name="Genome Res.">
        <title>A complete sequence of the T. tengcongensis genome.</title>
        <authorList>
            <person name="Bao Q."/>
            <person name="Tian Y."/>
            <person name="Li W."/>
            <person name="Xu Z."/>
            <person name="Xuan Z."/>
            <person name="Hu S."/>
            <person name="Dong W."/>
            <person name="Yang J."/>
            <person name="Chen Y."/>
            <person name="Xue Y."/>
            <person name="Xu Y."/>
            <person name="Lai X."/>
            <person name="Huang L."/>
            <person name="Dong X."/>
            <person name="Ma Y."/>
            <person name="Ling L."/>
            <person name="Tan H."/>
            <person name="Chen R."/>
            <person name="Wang J."/>
            <person name="Yu J."/>
            <person name="Yang H."/>
        </authorList>
    </citation>
    <scope>NUCLEOTIDE SEQUENCE [LARGE SCALE GENOMIC DNA]</scope>
    <source>
        <strain>DSM 15242 / JCM 11007 / NBRC 100824 / MB4</strain>
    </source>
</reference>
<gene>
    <name evidence="1" type="primary">rpsI</name>
    <name type="ordered locus">TTE2256</name>
</gene>
<proteinExistence type="inferred from homology"/>
<feature type="chain" id="PRO_0000111432" description="Small ribosomal subunit protein uS9">
    <location>
        <begin position="1"/>
        <end position="130"/>
    </location>
</feature>
<feature type="region of interest" description="Disordered" evidence="2">
    <location>
        <begin position="109"/>
        <end position="130"/>
    </location>
</feature>
<feature type="compositionally biased region" description="Basic residues" evidence="2">
    <location>
        <begin position="111"/>
        <end position="130"/>
    </location>
</feature>
<name>RS9_CALS4</name>
<sequence length="130" mass="14691">MATIQYYGTGRRKEAVARVRLMPGKGNIIINNKSLEEYFPLETLRYTVKQPLILTETIDKFDVYVKVSGGGLSGQAGAIRHGIARALVKADAELRPILKKAGFLTRDPRMKERRKYGLKKARKAPQFSKR</sequence>
<evidence type="ECO:0000255" key="1">
    <source>
        <dbReference type="HAMAP-Rule" id="MF_00532"/>
    </source>
</evidence>
<evidence type="ECO:0000256" key="2">
    <source>
        <dbReference type="SAM" id="MobiDB-lite"/>
    </source>
</evidence>
<evidence type="ECO:0000305" key="3"/>
<accession>Q8R7Y9</accession>